<evidence type="ECO:0000255" key="1">
    <source>
        <dbReference type="HAMAP-Rule" id="MF_01345"/>
    </source>
</evidence>
<evidence type="ECO:0000305" key="2"/>
<name>RS17_SHEB9</name>
<proteinExistence type="inferred from homology"/>
<gene>
    <name evidence="1" type="primary">rpsQ</name>
    <name type="ordered locus">Sbal195_0209</name>
</gene>
<sequence>MSDKIRTLQGRVTSNKMDKSITVAIERQVKHPIYGKYIKRTTKIHAHDETNQCNEGDLVAIRECRPLSKTKSWTLVEVVSKA</sequence>
<organism>
    <name type="scientific">Shewanella baltica (strain OS195)</name>
    <dbReference type="NCBI Taxonomy" id="399599"/>
    <lineage>
        <taxon>Bacteria</taxon>
        <taxon>Pseudomonadati</taxon>
        <taxon>Pseudomonadota</taxon>
        <taxon>Gammaproteobacteria</taxon>
        <taxon>Alteromonadales</taxon>
        <taxon>Shewanellaceae</taxon>
        <taxon>Shewanella</taxon>
    </lineage>
</organism>
<protein>
    <recommendedName>
        <fullName evidence="1">Small ribosomal subunit protein uS17</fullName>
    </recommendedName>
    <alternativeName>
        <fullName evidence="2">30S ribosomal protein S17</fullName>
    </alternativeName>
</protein>
<dbReference type="EMBL" id="CP000891">
    <property type="protein sequence ID" value="ABX47391.1"/>
    <property type="molecule type" value="Genomic_DNA"/>
</dbReference>
<dbReference type="RefSeq" id="WP_006083591.1">
    <property type="nucleotide sequence ID" value="NC_009997.1"/>
</dbReference>
<dbReference type="SMR" id="A9KWB1"/>
<dbReference type="GeneID" id="67441769"/>
<dbReference type="KEGG" id="sbn:Sbal195_0209"/>
<dbReference type="HOGENOM" id="CLU_073626_1_1_6"/>
<dbReference type="Proteomes" id="UP000000770">
    <property type="component" value="Chromosome"/>
</dbReference>
<dbReference type="GO" id="GO:0022627">
    <property type="term" value="C:cytosolic small ribosomal subunit"/>
    <property type="evidence" value="ECO:0007669"/>
    <property type="project" value="TreeGrafter"/>
</dbReference>
<dbReference type="GO" id="GO:0019843">
    <property type="term" value="F:rRNA binding"/>
    <property type="evidence" value="ECO:0007669"/>
    <property type="project" value="UniProtKB-UniRule"/>
</dbReference>
<dbReference type="GO" id="GO:0003735">
    <property type="term" value="F:structural constituent of ribosome"/>
    <property type="evidence" value="ECO:0007669"/>
    <property type="project" value="InterPro"/>
</dbReference>
<dbReference type="GO" id="GO:0006412">
    <property type="term" value="P:translation"/>
    <property type="evidence" value="ECO:0007669"/>
    <property type="project" value="UniProtKB-UniRule"/>
</dbReference>
<dbReference type="CDD" id="cd00364">
    <property type="entry name" value="Ribosomal_uS17"/>
    <property type="match status" value="1"/>
</dbReference>
<dbReference type="FunFam" id="2.40.50.140:FF:000014">
    <property type="entry name" value="30S ribosomal protein S17"/>
    <property type="match status" value="1"/>
</dbReference>
<dbReference type="Gene3D" id="2.40.50.140">
    <property type="entry name" value="Nucleic acid-binding proteins"/>
    <property type="match status" value="1"/>
</dbReference>
<dbReference type="HAMAP" id="MF_01345_B">
    <property type="entry name" value="Ribosomal_uS17_B"/>
    <property type="match status" value="1"/>
</dbReference>
<dbReference type="InterPro" id="IPR012340">
    <property type="entry name" value="NA-bd_OB-fold"/>
</dbReference>
<dbReference type="InterPro" id="IPR000266">
    <property type="entry name" value="Ribosomal_uS17"/>
</dbReference>
<dbReference type="InterPro" id="IPR019984">
    <property type="entry name" value="Ribosomal_uS17_bact/chlr"/>
</dbReference>
<dbReference type="InterPro" id="IPR019979">
    <property type="entry name" value="Ribosomal_uS17_CS"/>
</dbReference>
<dbReference type="NCBIfam" id="NF004123">
    <property type="entry name" value="PRK05610.1"/>
    <property type="match status" value="1"/>
</dbReference>
<dbReference type="NCBIfam" id="TIGR03635">
    <property type="entry name" value="uS17_bact"/>
    <property type="match status" value="1"/>
</dbReference>
<dbReference type="PANTHER" id="PTHR10744">
    <property type="entry name" value="40S RIBOSOMAL PROTEIN S11 FAMILY MEMBER"/>
    <property type="match status" value="1"/>
</dbReference>
<dbReference type="PANTHER" id="PTHR10744:SF1">
    <property type="entry name" value="SMALL RIBOSOMAL SUBUNIT PROTEIN US17M"/>
    <property type="match status" value="1"/>
</dbReference>
<dbReference type="Pfam" id="PF00366">
    <property type="entry name" value="Ribosomal_S17"/>
    <property type="match status" value="1"/>
</dbReference>
<dbReference type="PRINTS" id="PR00973">
    <property type="entry name" value="RIBOSOMALS17"/>
</dbReference>
<dbReference type="SUPFAM" id="SSF50249">
    <property type="entry name" value="Nucleic acid-binding proteins"/>
    <property type="match status" value="1"/>
</dbReference>
<dbReference type="PROSITE" id="PS00056">
    <property type="entry name" value="RIBOSOMAL_S17"/>
    <property type="match status" value="1"/>
</dbReference>
<keyword id="KW-0687">Ribonucleoprotein</keyword>
<keyword id="KW-0689">Ribosomal protein</keyword>
<keyword id="KW-0694">RNA-binding</keyword>
<keyword id="KW-0699">rRNA-binding</keyword>
<comment type="function">
    <text evidence="1">One of the primary rRNA binding proteins, it binds specifically to the 5'-end of 16S ribosomal RNA.</text>
</comment>
<comment type="subunit">
    <text evidence="1">Part of the 30S ribosomal subunit.</text>
</comment>
<comment type="similarity">
    <text evidence="1">Belongs to the universal ribosomal protein uS17 family.</text>
</comment>
<reference key="1">
    <citation type="submission" date="2007-11" db="EMBL/GenBank/DDBJ databases">
        <title>Complete sequence of chromosome of Shewanella baltica OS195.</title>
        <authorList>
            <consortium name="US DOE Joint Genome Institute"/>
            <person name="Copeland A."/>
            <person name="Lucas S."/>
            <person name="Lapidus A."/>
            <person name="Barry K."/>
            <person name="Glavina del Rio T."/>
            <person name="Dalin E."/>
            <person name="Tice H."/>
            <person name="Pitluck S."/>
            <person name="Chain P."/>
            <person name="Malfatti S."/>
            <person name="Shin M."/>
            <person name="Vergez L."/>
            <person name="Schmutz J."/>
            <person name="Larimer F."/>
            <person name="Land M."/>
            <person name="Hauser L."/>
            <person name="Kyrpides N."/>
            <person name="Kim E."/>
            <person name="Brettar I."/>
            <person name="Rodrigues J."/>
            <person name="Konstantinidis K."/>
            <person name="Klappenbach J."/>
            <person name="Hofle M."/>
            <person name="Tiedje J."/>
            <person name="Richardson P."/>
        </authorList>
    </citation>
    <scope>NUCLEOTIDE SEQUENCE [LARGE SCALE GENOMIC DNA]</scope>
    <source>
        <strain>OS195</strain>
    </source>
</reference>
<feature type="chain" id="PRO_1000086856" description="Small ribosomal subunit protein uS17">
    <location>
        <begin position="1"/>
        <end position="82"/>
    </location>
</feature>
<accession>A9KWB1</accession>